<reference key="1">
    <citation type="journal article" date="1992" name="Biochem. J.">
        <title>Nucleotide sequence, organization and characterization of the atp genes and the encoded subunits of Mycoplasma gallisepticum ATPase.</title>
        <authorList>
            <person name="Rasmussen O.F."/>
            <person name="Shirvan M.H."/>
            <person name="Margalit H."/>
            <person name="Christiansen C."/>
            <person name="Rottem S."/>
        </authorList>
    </citation>
    <scope>NUCLEOTIDE SEQUENCE [GENOMIC DNA]</scope>
    <source>
        <strain>A5969Var.B</strain>
    </source>
</reference>
<reference key="2">
    <citation type="journal article" date="2003" name="Microbiology">
        <title>The complete genome sequence of the avian pathogen Mycoplasma gallisepticum strain R(low).</title>
        <authorList>
            <person name="Papazisi L."/>
            <person name="Gorton T.S."/>
            <person name="Kutish G."/>
            <person name="Markham P.F."/>
            <person name="Browning G.F."/>
            <person name="Nguyen D.K."/>
            <person name="Swartzell S."/>
            <person name="Madan A."/>
            <person name="Mahairas G."/>
            <person name="Geary S.J."/>
        </authorList>
    </citation>
    <scope>NUCLEOTIDE SEQUENCE [LARGE SCALE GENOMIC DNA]</scope>
    <source>
        <strain>R(low / passage 15 / clone 2)</strain>
    </source>
</reference>
<dbReference type="EMBL" id="X64256">
    <property type="protein sequence ID" value="CAA45550.1"/>
    <property type="molecule type" value="Genomic_DNA"/>
</dbReference>
<dbReference type="EMBL" id="AE015450">
    <property type="protein sequence ID" value="AAP56655.1"/>
    <property type="molecule type" value="Genomic_DNA"/>
</dbReference>
<dbReference type="PIR" id="S24338">
    <property type="entry name" value="S24338"/>
</dbReference>
<dbReference type="RefSeq" id="WP_011113546.1">
    <property type="nucleotide sequence ID" value="NC_004829.2"/>
</dbReference>
<dbReference type="SMR" id="P33257"/>
<dbReference type="GeneID" id="93510133"/>
<dbReference type="KEGG" id="mga:MGA_1174"/>
<dbReference type="PATRIC" id="fig|233150.7.peg.339"/>
<dbReference type="HOGENOM" id="CLU_050669_0_1_14"/>
<dbReference type="OrthoDB" id="9812769at2"/>
<dbReference type="Proteomes" id="UP000001418">
    <property type="component" value="Chromosome"/>
</dbReference>
<dbReference type="GO" id="GO:0005886">
    <property type="term" value="C:plasma membrane"/>
    <property type="evidence" value="ECO:0007669"/>
    <property type="project" value="UniProtKB-SubCell"/>
</dbReference>
<dbReference type="GO" id="GO:0045259">
    <property type="term" value="C:proton-transporting ATP synthase complex"/>
    <property type="evidence" value="ECO:0007669"/>
    <property type="project" value="UniProtKB-KW"/>
</dbReference>
<dbReference type="GO" id="GO:0005524">
    <property type="term" value="F:ATP binding"/>
    <property type="evidence" value="ECO:0007669"/>
    <property type="project" value="UniProtKB-UniRule"/>
</dbReference>
<dbReference type="GO" id="GO:0046933">
    <property type="term" value="F:proton-transporting ATP synthase activity, rotational mechanism"/>
    <property type="evidence" value="ECO:0007669"/>
    <property type="project" value="UniProtKB-UniRule"/>
</dbReference>
<dbReference type="GO" id="GO:0042777">
    <property type="term" value="P:proton motive force-driven plasma membrane ATP synthesis"/>
    <property type="evidence" value="ECO:0007669"/>
    <property type="project" value="UniProtKB-UniRule"/>
</dbReference>
<dbReference type="CDD" id="cd12151">
    <property type="entry name" value="F1-ATPase_gamma"/>
    <property type="match status" value="1"/>
</dbReference>
<dbReference type="Gene3D" id="3.40.1380.10">
    <property type="match status" value="1"/>
</dbReference>
<dbReference type="Gene3D" id="1.10.287.80">
    <property type="entry name" value="ATP synthase, gamma subunit, helix hairpin domain"/>
    <property type="match status" value="1"/>
</dbReference>
<dbReference type="HAMAP" id="MF_00815">
    <property type="entry name" value="ATP_synth_gamma_bact"/>
    <property type="match status" value="1"/>
</dbReference>
<dbReference type="InterPro" id="IPR035968">
    <property type="entry name" value="ATP_synth_F1_ATPase_gsu"/>
</dbReference>
<dbReference type="InterPro" id="IPR000131">
    <property type="entry name" value="ATP_synth_F1_gsu"/>
</dbReference>
<dbReference type="NCBIfam" id="TIGR01146">
    <property type="entry name" value="ATPsyn_F1gamma"/>
    <property type="match status" value="1"/>
</dbReference>
<dbReference type="PANTHER" id="PTHR11693">
    <property type="entry name" value="ATP SYNTHASE GAMMA CHAIN"/>
    <property type="match status" value="1"/>
</dbReference>
<dbReference type="PANTHER" id="PTHR11693:SF22">
    <property type="entry name" value="ATP SYNTHASE SUBUNIT GAMMA, MITOCHONDRIAL"/>
    <property type="match status" value="1"/>
</dbReference>
<dbReference type="Pfam" id="PF00231">
    <property type="entry name" value="ATP-synt"/>
    <property type="match status" value="1"/>
</dbReference>
<dbReference type="PRINTS" id="PR00126">
    <property type="entry name" value="ATPASEGAMMA"/>
</dbReference>
<dbReference type="SUPFAM" id="SSF52943">
    <property type="entry name" value="ATP synthase (F1-ATPase), gamma subunit"/>
    <property type="match status" value="1"/>
</dbReference>
<dbReference type="PROSITE" id="PS00153">
    <property type="entry name" value="ATPASE_GAMMA"/>
    <property type="match status" value="1"/>
</dbReference>
<gene>
    <name evidence="1" type="primary">atpG</name>
    <name type="ordered locus">MYCGA3050</name>
    <name type="ORF">MGA_1174</name>
</gene>
<comment type="function">
    <text>Produces ATP from ADP in the presence of a proton gradient across the membrane. The gamma chain is believed to be important in regulating ATPase activity and the flow of protons through the CF(0) complex.</text>
</comment>
<comment type="subunit">
    <text>F-type ATPases have 2 components, CF(1) - the catalytic core - and CF(0) - the membrane proton channel. CF(1) has five subunits: alpha(3), beta(3), gamma(1), delta(1), epsilon(1). CF(0) has three main subunits: a, b and c.</text>
</comment>
<comment type="subcellular location">
    <subcellularLocation>
        <location evidence="1">Cell membrane</location>
        <topology evidence="1">Peripheral membrane protein</topology>
    </subcellularLocation>
</comment>
<comment type="similarity">
    <text evidence="1">Belongs to the ATPase gamma chain family.</text>
</comment>
<accession>P33257</accession>
<sequence length="289" mass="33094">MASMQDLKRRMESITVTHKITKAMKMLSTVKLNRFKATLGKTKEFYQEFYEVIGAVITNYNKTKPRTTTPTNQSTKRLWIVINTQLGLCGSYNTNVGKLLVSELAKDDEIILVGTKLNSFLRTRNHEDQIIHTYSINDKNIDFESSYMIGKHVLELHEKNQYDSIDCVYTNYINSLNFEAKKIQLIPADPSIFQADTLDRINDKFPKNISFEPGVDVIIPALEKQLLQVILYGCLIESKVCEYASRRNAMDTAAKNADDLYNKYKLLYNQLRQAKITQEINEIVAGAAK</sequence>
<evidence type="ECO:0000255" key="1">
    <source>
        <dbReference type="HAMAP-Rule" id="MF_00815"/>
    </source>
</evidence>
<evidence type="ECO:0000305" key="2"/>
<protein>
    <recommendedName>
        <fullName evidence="1">ATP synthase gamma chain</fullName>
    </recommendedName>
    <alternativeName>
        <fullName evidence="1">ATP synthase F1 sector gamma subunit</fullName>
    </alternativeName>
    <alternativeName>
        <fullName evidence="1">F-ATPase gamma subunit</fullName>
    </alternativeName>
</protein>
<name>ATPG_MYCGA</name>
<feature type="chain" id="PRO_0000073319" description="ATP synthase gamma chain">
    <location>
        <begin position="1"/>
        <end position="289"/>
    </location>
</feature>
<feature type="sequence conflict" description="In Ref. 1; CAA45550." evidence="2" ref="1">
    <original>V</original>
    <variation>I</variation>
    <location>
        <position position="56"/>
    </location>
</feature>
<feature type="sequence conflict" description="In Ref. 1; CAA45550." evidence="2" ref="1">
    <original>T</original>
    <variation>I</variation>
    <location>
        <position position="69"/>
    </location>
</feature>
<feature type="sequence conflict" description="In Ref. 1; CAA45550." evidence="2" ref="1">
    <original>S</original>
    <variation>N</variation>
    <location>
        <position position="102"/>
    </location>
</feature>
<feature type="sequence conflict" description="In Ref. 1; CAA45550." evidence="2" ref="1">
    <original>T</original>
    <variation>I</variation>
    <location>
        <position position="115"/>
    </location>
</feature>
<feature type="sequence conflict" description="In Ref. 1; CAA45550." evidence="2" ref="1">
    <original>D</original>
    <variation>A</variation>
    <location>
        <position position="163"/>
    </location>
</feature>
<feature type="sequence conflict" description="In Ref. 1; CAA45550." evidence="2" ref="1">
    <original>D</original>
    <variation>N</variation>
    <location>
        <position position="166"/>
    </location>
</feature>
<feature type="sequence conflict" description="In Ref. 1; CAA45550." evidence="2" ref="1">
    <original>A</original>
    <variation>T</variation>
    <location>
        <position position="195"/>
    </location>
</feature>
<keyword id="KW-0066">ATP synthesis</keyword>
<keyword id="KW-1003">Cell membrane</keyword>
<keyword id="KW-0139">CF(1)</keyword>
<keyword id="KW-0375">Hydrogen ion transport</keyword>
<keyword id="KW-0406">Ion transport</keyword>
<keyword id="KW-0472">Membrane</keyword>
<keyword id="KW-1185">Reference proteome</keyword>
<keyword id="KW-0813">Transport</keyword>
<proteinExistence type="inferred from homology"/>
<organism>
    <name type="scientific">Mycoplasmoides gallisepticum (strain R(low / passage 15 / clone 2))</name>
    <name type="common">Mycoplasma gallisepticum</name>
    <dbReference type="NCBI Taxonomy" id="710127"/>
    <lineage>
        <taxon>Bacteria</taxon>
        <taxon>Bacillati</taxon>
        <taxon>Mycoplasmatota</taxon>
        <taxon>Mycoplasmoidales</taxon>
        <taxon>Mycoplasmoidaceae</taxon>
        <taxon>Mycoplasmoides</taxon>
    </lineage>
</organism>